<comment type="function">
    <text evidence="1">Component of the PAN1 actin cytoskeleton-regulatory complex required for the internalization of endosomes during actin-coupled endocytosis. The complex links the site of endocytosis to the cell membrane-associated actin cytoskeleton. Mediates uptake of external molecules and vacuolar degradation of plasma membrane proteins. Plays a role in the proper organization of the cell membrane-associated actin cytoskeleton and promotes its destabilization (By similarity).</text>
</comment>
<comment type="subunit">
    <text evidence="1">Component of the PAN1 actin cytoskeleton-regulatory complex.</text>
</comment>
<comment type="subcellular location">
    <subcellularLocation>
        <location evidence="1">Cell membrane</location>
        <topology evidence="1">Peripheral membrane protein</topology>
        <orientation evidence="1">Cytoplasmic side</orientation>
    </subcellularLocation>
    <subcellularLocation>
        <location evidence="1">Endosome membrane</location>
        <topology evidence="1">Peripheral membrane protein</topology>
        <orientation evidence="1">Cytoplasmic side</orientation>
    </subcellularLocation>
    <subcellularLocation>
        <location evidence="4">Cytoplasm</location>
        <location evidence="4">Cytoskeleton</location>
        <location evidence="4">Actin patch</location>
    </subcellularLocation>
    <text evidence="1">Cytoplasmic and cortical actin patches.</text>
</comment>
<comment type="similarity">
    <text evidence="6">Belongs to the SLA1 family.</text>
</comment>
<dbReference type="EMBL" id="CU329670">
    <property type="protein sequence ID" value="CAB11030.1"/>
    <property type="molecule type" value="Genomic_DNA"/>
</dbReference>
<dbReference type="PIR" id="T37781">
    <property type="entry name" value="T37781"/>
</dbReference>
<dbReference type="RefSeq" id="NP_594213.1">
    <property type="nucleotide sequence ID" value="NM_001019636.2"/>
</dbReference>
<dbReference type="SMR" id="O13736"/>
<dbReference type="BioGRID" id="278804">
    <property type="interactions" value="6"/>
</dbReference>
<dbReference type="FunCoup" id="O13736">
    <property type="interactions" value="301"/>
</dbReference>
<dbReference type="STRING" id="284812.O13736"/>
<dbReference type="iPTMnet" id="O13736"/>
<dbReference type="SwissPalm" id="O13736"/>
<dbReference type="PaxDb" id="4896-SPAC16E8.01.1"/>
<dbReference type="EnsemblFungi" id="SPAC16E8.01.1">
    <property type="protein sequence ID" value="SPAC16E8.01.1:pep"/>
    <property type="gene ID" value="SPAC16E8.01"/>
</dbReference>
<dbReference type="GeneID" id="2542338"/>
<dbReference type="KEGG" id="spo:2542338"/>
<dbReference type="PomBase" id="SPAC16E8.01"/>
<dbReference type="VEuPathDB" id="FungiDB:SPAC16E8.01"/>
<dbReference type="eggNOG" id="ENOG502QQC3">
    <property type="taxonomic scope" value="Eukaryota"/>
</dbReference>
<dbReference type="HOGENOM" id="CLU_003674_0_0_1"/>
<dbReference type="InParanoid" id="O13736"/>
<dbReference type="OMA" id="FMAQGED"/>
<dbReference type="PhylomeDB" id="O13736"/>
<dbReference type="Reactome" id="R-SPO-8856828">
    <property type="pathway name" value="Clathrin-mediated endocytosis"/>
</dbReference>
<dbReference type="Reactome" id="R-SPO-9013406">
    <property type="pathway name" value="RHOQ GTPase cycle"/>
</dbReference>
<dbReference type="Reactome" id="R-SPO-9696270">
    <property type="pathway name" value="RND2 GTPase cycle"/>
</dbReference>
<dbReference type="PRO" id="PR:O13736"/>
<dbReference type="Proteomes" id="UP000002485">
    <property type="component" value="Chromosome I"/>
</dbReference>
<dbReference type="GO" id="GO:0030479">
    <property type="term" value="C:actin cortical patch"/>
    <property type="evidence" value="ECO:0000314"/>
    <property type="project" value="PomBase"/>
</dbReference>
<dbReference type="GO" id="GO:0032153">
    <property type="term" value="C:cell division site"/>
    <property type="evidence" value="ECO:0007005"/>
    <property type="project" value="PomBase"/>
</dbReference>
<dbReference type="GO" id="GO:0051286">
    <property type="term" value="C:cell tip"/>
    <property type="evidence" value="ECO:0007005"/>
    <property type="project" value="PomBase"/>
</dbReference>
<dbReference type="GO" id="GO:0005829">
    <property type="term" value="C:cytosol"/>
    <property type="evidence" value="ECO:0007005"/>
    <property type="project" value="PomBase"/>
</dbReference>
<dbReference type="GO" id="GO:0010008">
    <property type="term" value="C:endosome membrane"/>
    <property type="evidence" value="ECO:0007669"/>
    <property type="project" value="UniProtKB-SubCell"/>
</dbReference>
<dbReference type="GO" id="GO:0005643">
    <property type="term" value="C:nuclear pore"/>
    <property type="evidence" value="ECO:0000314"/>
    <property type="project" value="PomBase"/>
</dbReference>
<dbReference type="GO" id="GO:0005634">
    <property type="term" value="C:nucleus"/>
    <property type="evidence" value="ECO:0000318"/>
    <property type="project" value="GO_Central"/>
</dbReference>
<dbReference type="GO" id="GO:0005886">
    <property type="term" value="C:plasma membrane"/>
    <property type="evidence" value="ECO:0007669"/>
    <property type="project" value="UniProtKB-SubCell"/>
</dbReference>
<dbReference type="GO" id="GO:0003779">
    <property type="term" value="F:actin binding"/>
    <property type="evidence" value="ECO:0007669"/>
    <property type="project" value="UniProtKB-KW"/>
</dbReference>
<dbReference type="GO" id="GO:0042802">
    <property type="term" value="F:identical protein binding"/>
    <property type="evidence" value="ECO:0007669"/>
    <property type="project" value="InterPro"/>
</dbReference>
<dbReference type="GO" id="GO:0030674">
    <property type="term" value="F:protein-macromolecule adaptor activity"/>
    <property type="evidence" value="ECO:0007669"/>
    <property type="project" value="InterPro"/>
</dbReference>
<dbReference type="GO" id="GO:0043130">
    <property type="term" value="F:ubiquitin binding"/>
    <property type="evidence" value="ECO:0007669"/>
    <property type="project" value="InterPro"/>
</dbReference>
<dbReference type="GO" id="GO:0000147">
    <property type="term" value="P:actin cortical patch assembly"/>
    <property type="evidence" value="ECO:0000318"/>
    <property type="project" value="GO_Central"/>
</dbReference>
<dbReference type="GO" id="GO:0006897">
    <property type="term" value="P:endocytosis"/>
    <property type="evidence" value="ECO:0000266"/>
    <property type="project" value="PomBase"/>
</dbReference>
<dbReference type="GO" id="GO:0030833">
    <property type="term" value="P:regulation of actin filament polymerization"/>
    <property type="evidence" value="ECO:0000318"/>
    <property type="project" value="GO_Central"/>
</dbReference>
<dbReference type="CDD" id="cd09532">
    <property type="entry name" value="SAM_SLA1_fungal"/>
    <property type="match status" value="1"/>
</dbReference>
<dbReference type="CDD" id="cd11773">
    <property type="entry name" value="SH3_Sla1p_1"/>
    <property type="match status" value="1"/>
</dbReference>
<dbReference type="CDD" id="cd11774">
    <property type="entry name" value="SH3_Sla1p_2"/>
    <property type="match status" value="1"/>
</dbReference>
<dbReference type="CDD" id="cd11775">
    <property type="entry name" value="SH3_Sla1p_3"/>
    <property type="match status" value="1"/>
</dbReference>
<dbReference type="Gene3D" id="2.30.29.30">
    <property type="entry name" value="Pleckstrin-homology domain (PH domain)/Phosphotyrosine-binding domain (PTB)"/>
    <property type="match status" value="1"/>
</dbReference>
<dbReference type="Gene3D" id="2.30.30.40">
    <property type="entry name" value="SH3 Domains"/>
    <property type="match status" value="3"/>
</dbReference>
<dbReference type="Gene3D" id="2.30.30.700">
    <property type="entry name" value="SLA1 homology domain 1"/>
    <property type="match status" value="1"/>
</dbReference>
<dbReference type="Gene3D" id="1.10.150.50">
    <property type="entry name" value="Transcription Factor, Ets-1"/>
    <property type="match status" value="1"/>
</dbReference>
<dbReference type="InterPro" id="IPR013182">
    <property type="entry name" value="DUF1720"/>
</dbReference>
<dbReference type="InterPro" id="IPR011993">
    <property type="entry name" value="PH-like_dom_sf"/>
</dbReference>
<dbReference type="InterPro" id="IPR056996">
    <property type="entry name" value="PH_SLA1"/>
</dbReference>
<dbReference type="InterPro" id="IPR013761">
    <property type="entry name" value="SAM/pointed_sf"/>
</dbReference>
<dbReference type="InterPro" id="IPR036028">
    <property type="entry name" value="SH3-like_dom_sf"/>
</dbReference>
<dbReference type="InterPro" id="IPR001452">
    <property type="entry name" value="SH3_domain"/>
</dbReference>
<dbReference type="InterPro" id="IPR007131">
    <property type="entry name" value="SHD1"/>
</dbReference>
<dbReference type="InterPro" id="IPR035800">
    <property type="entry name" value="Sla1_SH3_1"/>
</dbReference>
<dbReference type="InterPro" id="IPR035821">
    <property type="entry name" value="Sla1_SH3_3"/>
</dbReference>
<dbReference type="PANTHER" id="PTHR15735:SF19">
    <property type="entry name" value="ACTIN CYTOSKELETON-REGULATORY COMPLEX PROTEIN SLA1"/>
    <property type="match status" value="1"/>
</dbReference>
<dbReference type="PANTHER" id="PTHR15735">
    <property type="entry name" value="FCH AND DOUBLE SH3 DOMAINS PROTEIN"/>
    <property type="match status" value="1"/>
</dbReference>
<dbReference type="Pfam" id="PF08226">
    <property type="entry name" value="DUF1720"/>
    <property type="match status" value="3"/>
</dbReference>
<dbReference type="Pfam" id="PF24081">
    <property type="entry name" value="PH_SLA1"/>
    <property type="match status" value="1"/>
</dbReference>
<dbReference type="Pfam" id="PF00018">
    <property type="entry name" value="SH3_1"/>
    <property type="match status" value="2"/>
</dbReference>
<dbReference type="Pfam" id="PF03983">
    <property type="entry name" value="SHD1"/>
    <property type="match status" value="1"/>
</dbReference>
<dbReference type="PRINTS" id="PR01217">
    <property type="entry name" value="PRICHEXTENSN"/>
</dbReference>
<dbReference type="SMART" id="SM00326">
    <property type="entry name" value="SH3"/>
    <property type="match status" value="3"/>
</dbReference>
<dbReference type="SUPFAM" id="SSF50044">
    <property type="entry name" value="SH3-domain"/>
    <property type="match status" value="3"/>
</dbReference>
<dbReference type="PROSITE" id="PS50002">
    <property type="entry name" value="SH3"/>
    <property type="match status" value="3"/>
</dbReference>
<feature type="chain" id="PRO_0000303944" description="Actin cytoskeleton-regulatory complex protein sla1">
    <location>
        <begin position="1"/>
        <end position="1420"/>
    </location>
</feature>
<feature type="domain" description="SH3 1" evidence="2">
    <location>
        <begin position="5"/>
        <end position="81"/>
    </location>
</feature>
<feature type="domain" description="SH3 2" evidence="2">
    <location>
        <begin position="82"/>
        <end position="139"/>
    </location>
</feature>
<feature type="domain" description="SH3 3" evidence="2">
    <location>
        <begin position="508"/>
        <end position="568"/>
    </location>
</feature>
<feature type="region of interest" description="Disordered" evidence="3">
    <location>
        <begin position="138"/>
        <end position="344"/>
    </location>
</feature>
<feature type="region of interest" description="Disordered" evidence="3">
    <location>
        <begin position="560"/>
        <end position="657"/>
    </location>
</feature>
<feature type="region of interest" description="Disordered" evidence="3">
    <location>
        <begin position="708"/>
        <end position="786"/>
    </location>
</feature>
<feature type="region of interest" description="Disordered" evidence="3">
    <location>
        <begin position="902"/>
        <end position="1016"/>
    </location>
</feature>
<feature type="compositionally biased region" description="Low complexity" evidence="3">
    <location>
        <begin position="139"/>
        <end position="151"/>
    </location>
</feature>
<feature type="compositionally biased region" description="Polar residues" evidence="3">
    <location>
        <begin position="152"/>
        <end position="165"/>
    </location>
</feature>
<feature type="compositionally biased region" description="Low complexity" evidence="3">
    <location>
        <begin position="173"/>
        <end position="185"/>
    </location>
</feature>
<feature type="compositionally biased region" description="Pro residues" evidence="3">
    <location>
        <begin position="187"/>
        <end position="198"/>
    </location>
</feature>
<feature type="compositionally biased region" description="Pro residues" evidence="3">
    <location>
        <begin position="235"/>
        <end position="247"/>
    </location>
</feature>
<feature type="compositionally biased region" description="Polar residues" evidence="3">
    <location>
        <begin position="250"/>
        <end position="271"/>
    </location>
</feature>
<feature type="compositionally biased region" description="Pro residues" evidence="3">
    <location>
        <begin position="272"/>
        <end position="286"/>
    </location>
</feature>
<feature type="compositionally biased region" description="Polar residues" evidence="3">
    <location>
        <begin position="287"/>
        <end position="301"/>
    </location>
</feature>
<feature type="compositionally biased region" description="Basic and acidic residues" evidence="3">
    <location>
        <begin position="326"/>
        <end position="336"/>
    </location>
</feature>
<feature type="compositionally biased region" description="Low complexity" evidence="3">
    <location>
        <begin position="572"/>
        <end position="587"/>
    </location>
</feature>
<feature type="compositionally biased region" description="Basic residues" evidence="3">
    <location>
        <begin position="589"/>
        <end position="600"/>
    </location>
</feature>
<feature type="compositionally biased region" description="Basic and acidic residues" evidence="3">
    <location>
        <begin position="601"/>
        <end position="636"/>
    </location>
</feature>
<feature type="compositionally biased region" description="Basic and acidic residues" evidence="3">
    <location>
        <begin position="709"/>
        <end position="742"/>
    </location>
</feature>
<feature type="compositionally biased region" description="Basic and acidic residues" evidence="3">
    <location>
        <begin position="969"/>
        <end position="980"/>
    </location>
</feature>
<feature type="compositionally biased region" description="Basic and acidic residues" evidence="3">
    <location>
        <begin position="991"/>
        <end position="1005"/>
    </location>
</feature>
<feature type="modified residue" description="Phosphoserine" evidence="5">
    <location>
        <position position="309"/>
    </location>
</feature>
<feature type="modified residue" description="Phosphoserine" evidence="5">
    <location>
        <position position="311"/>
    </location>
</feature>
<feature type="modified residue" description="Phosphoserine" evidence="5">
    <location>
        <position position="312"/>
    </location>
</feature>
<feature type="modified residue" description="Phosphoserine" evidence="5">
    <location>
        <position position="454"/>
    </location>
</feature>
<feature type="modified residue" description="Phosphoserine" evidence="5">
    <location>
        <position position="573"/>
    </location>
</feature>
<feature type="modified residue" description="Phosphoserine" evidence="5">
    <location>
        <position position="577"/>
    </location>
</feature>
<feature type="modified residue" description="Phosphoserine" evidence="5">
    <location>
        <position position="927"/>
    </location>
</feature>
<feature type="modified residue" description="Phosphothreonine" evidence="5">
    <location>
        <position position="929"/>
    </location>
</feature>
<protein>
    <recommendedName>
        <fullName>Actin cytoskeleton-regulatory complex protein sla1</fullName>
    </recommendedName>
</protein>
<name>SLA1_SCHPO</name>
<organism>
    <name type="scientific">Schizosaccharomyces pombe (strain 972 / ATCC 24843)</name>
    <name type="common">Fission yeast</name>
    <dbReference type="NCBI Taxonomy" id="284812"/>
    <lineage>
        <taxon>Eukaryota</taxon>
        <taxon>Fungi</taxon>
        <taxon>Dikarya</taxon>
        <taxon>Ascomycota</taxon>
        <taxon>Taphrinomycotina</taxon>
        <taxon>Schizosaccharomycetes</taxon>
        <taxon>Schizosaccharomycetales</taxon>
        <taxon>Schizosaccharomycetaceae</taxon>
        <taxon>Schizosaccharomyces</taxon>
    </lineage>
</organism>
<gene>
    <name type="primary">sla1</name>
    <name type="ORF">SPAC16E8.01</name>
</gene>
<proteinExistence type="evidence at protein level"/>
<sequence>MANLPIIGIYKVLYSYEPQEINPGEEIPENEREISIVEDEIVCLLEKGEDDWYLVKRNVNSNDDDEEIGIVPSNYITEAEPSTKMKALYDYTQQSVDEISFQADQTLDCYGDTDSDWILVGFNNNFGLAPRNYVEGMDASSAPASQEPSASGVNAPTVSAPNSMVSPPPSFQPPSAAAPATSLPSDYNPPPPPPPPPAVEDQAADANEPDDYYSSGRAVSPEIPPTYTPKQADPLPAPPPPPPPTLPPQSTNTSQLPMPSRNVNNLGSQVNIPPPPATPSQPPRPPTNASTRSTGTSSSMAHSYDSPPSPSSPSDAYGDPNQHLKLRTDSHDDSRAYDSSSSMGNPAYEKWEVREVVGKKKKRTGILAINNKSIVLTFTKTMDAAQVWPVTDLVNYSSERKHVFIEFNSDSGITSLHLHASSNTNADNIIRALGDVAGSARAAGLREIAAASGSPMPKLPSDSALHRLNAASDAAGVNGGRTGDYEMSTVYGDRSARAEDHKPKDSSAGQKMGTVLYDFIAEAADELTVKANMRVVIVNDTASSDWWKCSVDGKEGVVPSNFIKPDTEGDAKSPPSSSKSGQGSSLSRRASKHESKHKRDSKHEARPESKHESHRESKSAEKDKKDKKDKKEDSKRSRSHSVSKPDSSKLRTWTDRTGAFKVEAEFLGYSDDKIHLHKTNGVKISVPSAKMSYKDLDYVELMTGKKVYSRTERKKDTQKQSHDHGHSHSKSHDREKEKEKKKDREHRKHRETEEEDEGPPPQPARPESTRPALAPPSSSHSNDKYDVIQERPKISYDWFDFFLRCGVDFTVCNRYTHNFNNEHLDEACIPSLNPDTLRTLGLKEGDIIRVMNHVNELNGVSTKPASAITPETKSTVNQIMSGGEALAAPVAVPAPIPAPVAEPAPPAAPAKEVVEKAPSPPATRPKSTTPQKFDDDAWANKPVTEPPVRASSVTVEPARVTESMNKMNISEEAKKPEAPSRPRTAPIPEPEEQKKAPVEKKDAEKSVQAPIPAQPTGNITIQNAYFTAPQPMAADPFQSPLYVQPTGFQPPPSALPIQPTGYMQPIPVQATGYQPLMVQPTGLQPHMTGVMPQVTGVMPQMTGVVPQMTGVMPQMTGVQVQKTGAMPQQPVNYGYQVAGMQPQATGIISQPTGIRAQATGIMTQPTGLHTQATGMMQPTGMQPQATGIMPQATGMMQPTGMQPQVTGIMPQSMPMQPQMTGVQVQKTGMVAQPMLSQYTGYQQNYTPTAMPAADGYGMQPSMNDTQAYYNMNAQTPVNYGFAGGQDTSFGYEQQQMYSPMQQQQQQYYGTEMQPDMGYQQPMMSNYYDPMQMQQQTPYGYNQTGMEGYSEYGYAQPAGNMANPMSYDPVSNASLYMPSDYNQQTQPANYYDSSFGGAQGANEAGKKASIYQATPDNPFGF</sequence>
<reference key="1">
    <citation type="journal article" date="2002" name="Nature">
        <title>The genome sequence of Schizosaccharomyces pombe.</title>
        <authorList>
            <person name="Wood V."/>
            <person name="Gwilliam R."/>
            <person name="Rajandream M.A."/>
            <person name="Lyne M.H."/>
            <person name="Lyne R."/>
            <person name="Stewart A."/>
            <person name="Sgouros J.G."/>
            <person name="Peat N."/>
            <person name="Hayles J."/>
            <person name="Baker S.G."/>
            <person name="Basham D."/>
            <person name="Bowman S."/>
            <person name="Brooks K."/>
            <person name="Brown D."/>
            <person name="Brown S."/>
            <person name="Chillingworth T."/>
            <person name="Churcher C.M."/>
            <person name="Collins M."/>
            <person name="Connor R."/>
            <person name="Cronin A."/>
            <person name="Davis P."/>
            <person name="Feltwell T."/>
            <person name="Fraser A."/>
            <person name="Gentles S."/>
            <person name="Goble A."/>
            <person name="Hamlin N."/>
            <person name="Harris D.E."/>
            <person name="Hidalgo J."/>
            <person name="Hodgson G."/>
            <person name="Holroyd S."/>
            <person name="Hornsby T."/>
            <person name="Howarth S."/>
            <person name="Huckle E.J."/>
            <person name="Hunt S."/>
            <person name="Jagels K."/>
            <person name="James K.D."/>
            <person name="Jones L."/>
            <person name="Jones M."/>
            <person name="Leather S."/>
            <person name="McDonald S."/>
            <person name="McLean J."/>
            <person name="Mooney P."/>
            <person name="Moule S."/>
            <person name="Mungall K.L."/>
            <person name="Murphy L.D."/>
            <person name="Niblett D."/>
            <person name="Odell C."/>
            <person name="Oliver K."/>
            <person name="O'Neil S."/>
            <person name="Pearson D."/>
            <person name="Quail M.A."/>
            <person name="Rabbinowitsch E."/>
            <person name="Rutherford K.M."/>
            <person name="Rutter S."/>
            <person name="Saunders D."/>
            <person name="Seeger K."/>
            <person name="Sharp S."/>
            <person name="Skelton J."/>
            <person name="Simmonds M.N."/>
            <person name="Squares R."/>
            <person name="Squares S."/>
            <person name="Stevens K."/>
            <person name="Taylor K."/>
            <person name="Taylor R.G."/>
            <person name="Tivey A."/>
            <person name="Walsh S.V."/>
            <person name="Warren T."/>
            <person name="Whitehead S."/>
            <person name="Woodward J.R."/>
            <person name="Volckaert G."/>
            <person name="Aert R."/>
            <person name="Robben J."/>
            <person name="Grymonprez B."/>
            <person name="Weltjens I."/>
            <person name="Vanstreels E."/>
            <person name="Rieger M."/>
            <person name="Schaefer M."/>
            <person name="Mueller-Auer S."/>
            <person name="Gabel C."/>
            <person name="Fuchs M."/>
            <person name="Duesterhoeft A."/>
            <person name="Fritzc C."/>
            <person name="Holzer E."/>
            <person name="Moestl D."/>
            <person name="Hilbert H."/>
            <person name="Borzym K."/>
            <person name="Langer I."/>
            <person name="Beck A."/>
            <person name="Lehrach H."/>
            <person name="Reinhardt R."/>
            <person name="Pohl T.M."/>
            <person name="Eger P."/>
            <person name="Zimmermann W."/>
            <person name="Wedler H."/>
            <person name="Wambutt R."/>
            <person name="Purnelle B."/>
            <person name="Goffeau A."/>
            <person name="Cadieu E."/>
            <person name="Dreano S."/>
            <person name="Gloux S."/>
            <person name="Lelaure V."/>
            <person name="Mottier S."/>
            <person name="Galibert F."/>
            <person name="Aves S.J."/>
            <person name="Xiang Z."/>
            <person name="Hunt C."/>
            <person name="Moore K."/>
            <person name="Hurst S.M."/>
            <person name="Lucas M."/>
            <person name="Rochet M."/>
            <person name="Gaillardin C."/>
            <person name="Tallada V.A."/>
            <person name="Garzon A."/>
            <person name="Thode G."/>
            <person name="Daga R.R."/>
            <person name="Cruzado L."/>
            <person name="Jimenez J."/>
            <person name="Sanchez M."/>
            <person name="del Rey F."/>
            <person name="Benito J."/>
            <person name="Dominguez A."/>
            <person name="Revuelta J.L."/>
            <person name="Moreno S."/>
            <person name="Armstrong J."/>
            <person name="Forsburg S.L."/>
            <person name="Cerutti L."/>
            <person name="Lowe T."/>
            <person name="McCombie W.R."/>
            <person name="Paulsen I."/>
            <person name="Potashkin J."/>
            <person name="Shpakovski G.V."/>
            <person name="Ussery D."/>
            <person name="Barrell B.G."/>
            <person name="Nurse P."/>
        </authorList>
    </citation>
    <scope>NUCLEOTIDE SEQUENCE [LARGE SCALE GENOMIC DNA]</scope>
    <source>
        <strain>972 / ATCC 24843</strain>
    </source>
</reference>
<reference key="2">
    <citation type="journal article" date="2006" name="Nat. Biotechnol.">
        <title>ORFeome cloning and global analysis of protein localization in the fission yeast Schizosaccharomyces pombe.</title>
        <authorList>
            <person name="Matsuyama A."/>
            <person name="Arai R."/>
            <person name="Yashiroda Y."/>
            <person name="Shirai A."/>
            <person name="Kamata A."/>
            <person name="Sekido S."/>
            <person name="Kobayashi Y."/>
            <person name="Hashimoto A."/>
            <person name="Hamamoto M."/>
            <person name="Hiraoka Y."/>
            <person name="Horinouchi S."/>
            <person name="Yoshida M."/>
        </authorList>
    </citation>
    <scope>SUBCELLULAR LOCATION [LARGE SCALE ANALYSIS]</scope>
</reference>
<reference key="3">
    <citation type="journal article" date="2008" name="J. Proteome Res.">
        <title>Phosphoproteome analysis of fission yeast.</title>
        <authorList>
            <person name="Wilson-Grady J.T."/>
            <person name="Villen J."/>
            <person name="Gygi S.P."/>
        </authorList>
    </citation>
    <scope>PHOSPHORYLATION [LARGE SCALE ANALYSIS] AT SER-309; SER-311; SER-312; SER-454; SER-573; SER-577; SER-927 AND THR-929</scope>
    <scope>IDENTIFICATION BY MASS SPECTROMETRY</scope>
</reference>
<evidence type="ECO:0000250" key="1"/>
<evidence type="ECO:0000255" key="2">
    <source>
        <dbReference type="PROSITE-ProRule" id="PRU00192"/>
    </source>
</evidence>
<evidence type="ECO:0000256" key="3">
    <source>
        <dbReference type="SAM" id="MobiDB-lite"/>
    </source>
</evidence>
<evidence type="ECO:0000269" key="4">
    <source>
    </source>
</evidence>
<evidence type="ECO:0000269" key="5">
    <source>
    </source>
</evidence>
<evidence type="ECO:0000305" key="6"/>
<keyword id="KW-0009">Actin-binding</keyword>
<keyword id="KW-1003">Cell membrane</keyword>
<keyword id="KW-0963">Cytoplasm</keyword>
<keyword id="KW-0206">Cytoskeleton</keyword>
<keyword id="KW-0254">Endocytosis</keyword>
<keyword id="KW-0967">Endosome</keyword>
<keyword id="KW-0472">Membrane</keyword>
<keyword id="KW-0597">Phosphoprotein</keyword>
<keyword id="KW-1185">Reference proteome</keyword>
<keyword id="KW-0677">Repeat</keyword>
<keyword id="KW-0728">SH3 domain</keyword>
<accession>O13736</accession>